<gene>
    <name type="primary">crtc3</name>
    <name type="synonym">torc3</name>
</gene>
<dbReference type="EMBL" id="BC094209">
    <property type="protein sequence ID" value="AAH94209.1"/>
    <property type="status" value="ALT_INIT"/>
    <property type="molecule type" value="mRNA"/>
</dbReference>
<dbReference type="SMR" id="Q52KS4"/>
<dbReference type="IntAct" id="Q52KS4">
    <property type="interactions" value="1"/>
</dbReference>
<dbReference type="Xenbase" id="XB-GENE-5787102">
    <property type="gene designation" value="crtc3.L"/>
</dbReference>
<dbReference type="Proteomes" id="UP000186698">
    <property type="component" value="Unplaced"/>
</dbReference>
<dbReference type="GO" id="GO:0005737">
    <property type="term" value="C:cytoplasm"/>
    <property type="evidence" value="ECO:0000318"/>
    <property type="project" value="GO_Central"/>
</dbReference>
<dbReference type="GO" id="GO:0005634">
    <property type="term" value="C:nucleus"/>
    <property type="evidence" value="ECO:0000318"/>
    <property type="project" value="GO_Central"/>
</dbReference>
<dbReference type="GO" id="GO:0008140">
    <property type="term" value="F:cAMP response element binding protein binding"/>
    <property type="evidence" value="ECO:0000318"/>
    <property type="project" value="GO_Central"/>
</dbReference>
<dbReference type="GO" id="GO:0003713">
    <property type="term" value="F:transcription coactivator activity"/>
    <property type="evidence" value="ECO:0000318"/>
    <property type="project" value="GO_Central"/>
</dbReference>
<dbReference type="GO" id="GO:0071320">
    <property type="term" value="P:cellular response to cAMP"/>
    <property type="evidence" value="ECO:0000318"/>
    <property type="project" value="GO_Central"/>
</dbReference>
<dbReference type="GO" id="GO:0071878">
    <property type="term" value="P:negative regulation of adenylate cyclase-activating adrenergic receptor signaling pathway"/>
    <property type="evidence" value="ECO:0000318"/>
    <property type="project" value="GO_Central"/>
</dbReference>
<dbReference type="GO" id="GO:0045944">
    <property type="term" value="P:positive regulation of transcription by RNA polymerase II"/>
    <property type="evidence" value="ECO:0000318"/>
    <property type="project" value="GO_Central"/>
</dbReference>
<dbReference type="GO" id="GO:0051289">
    <property type="term" value="P:protein homotetramerization"/>
    <property type="evidence" value="ECO:0007669"/>
    <property type="project" value="InterPro"/>
</dbReference>
<dbReference type="InterPro" id="IPR024786">
    <property type="entry name" value="TORC"/>
</dbReference>
<dbReference type="InterPro" id="IPR024785">
    <property type="entry name" value="TORC_C"/>
</dbReference>
<dbReference type="InterPro" id="IPR024784">
    <property type="entry name" value="TORC_M"/>
</dbReference>
<dbReference type="InterPro" id="IPR024783">
    <property type="entry name" value="TORC_N"/>
</dbReference>
<dbReference type="PANTHER" id="PTHR13589">
    <property type="entry name" value="CREB-REGULATED TRANSCRIPTION COACTIVATOR"/>
    <property type="match status" value="1"/>
</dbReference>
<dbReference type="PANTHER" id="PTHR13589:SF4">
    <property type="entry name" value="CREB-REGULATED TRANSCRIPTION COACTIVATOR 3"/>
    <property type="match status" value="1"/>
</dbReference>
<dbReference type="Pfam" id="PF12886">
    <property type="entry name" value="TORC_C"/>
    <property type="match status" value="1"/>
</dbReference>
<dbReference type="Pfam" id="PF12885">
    <property type="entry name" value="TORC_M"/>
    <property type="match status" value="1"/>
</dbReference>
<dbReference type="Pfam" id="PF12884">
    <property type="entry name" value="TORC_N"/>
    <property type="match status" value="1"/>
</dbReference>
<comment type="function">
    <text evidence="1">Transcriptional coactivator for creb1 which activates transcription through both consensus and variant cAMP response element (CRE) sites. Acts as a coactivator, in the SIK/TORC signaling pathway, being active when dephosphorylated and acts independently of creb1 'Ser-119' phosphorylation. Enhances the interaction of creb1 with taf4. Regulates the expression of specific CREB-activated genes such as the steroidogenic gene, StAR. Potent coactivator of ppargc1a and inducer of mitochondrial biogenesis in muscle cells (By similarity).</text>
</comment>
<comment type="subunit">
    <text evidence="1">Binding, as a tetramer, through its N-terminal region, with the bZIP domain of creb1 enhances recruitment of taf4 to the promoter. 'Arg-300' in the bZIP domain of creb1 is essential for this interaction (By similarity).</text>
</comment>
<comment type="subcellular location">
    <subcellularLocation>
        <location evidence="1">Nucleus</location>
    </subcellularLocation>
    <subcellularLocation>
        <location evidence="1">Cytoplasm</location>
    </subcellularLocation>
    <text evidence="1">Appears to be mainly nuclear.</text>
</comment>
<comment type="similarity">
    <text evidence="3">Belongs to the TORC family.</text>
</comment>
<comment type="sequence caution" evidence="3">
    <conflict type="erroneous initiation">
        <sequence resource="EMBL-CDS" id="AAH94209"/>
    </conflict>
</comment>
<proteinExistence type="evidence at transcript level"/>
<name>CRTC3_XENLA</name>
<feature type="chain" id="PRO_0000318533" description="CREB-regulated transcription coactivator 3">
    <location>
        <begin position="1"/>
        <end position="632"/>
    </location>
</feature>
<feature type="region of interest" description="Disordered" evidence="2">
    <location>
        <begin position="105"/>
        <end position="156"/>
    </location>
</feature>
<feature type="region of interest" description="Disordered" evidence="2">
    <location>
        <begin position="310"/>
        <end position="455"/>
    </location>
</feature>
<feature type="compositionally biased region" description="Basic residues" evidence="2">
    <location>
        <begin position="105"/>
        <end position="115"/>
    </location>
</feature>
<feature type="compositionally biased region" description="Low complexity" evidence="2">
    <location>
        <begin position="145"/>
        <end position="156"/>
    </location>
</feature>
<feature type="compositionally biased region" description="Polar residues" evidence="2">
    <location>
        <begin position="310"/>
        <end position="338"/>
    </location>
</feature>
<feature type="compositionally biased region" description="Low complexity" evidence="2">
    <location>
        <begin position="339"/>
        <end position="360"/>
    </location>
</feature>
<feature type="compositionally biased region" description="Polar residues" evidence="2">
    <location>
        <begin position="372"/>
        <end position="405"/>
    </location>
</feature>
<feature type="compositionally biased region" description="Pro residues" evidence="2">
    <location>
        <begin position="413"/>
        <end position="424"/>
    </location>
</feature>
<feature type="compositionally biased region" description="Low complexity" evidence="2">
    <location>
        <begin position="425"/>
        <end position="440"/>
    </location>
</feature>
<feature type="modified residue" description="Phosphoserine" evidence="1">
    <location>
        <position position="66"/>
    </location>
</feature>
<feature type="modified residue" description="Phosphoserine" evidence="1">
    <location>
        <position position="133"/>
    </location>
</feature>
<feature type="modified residue" description="Phosphoserine; by SIK2" evidence="1">
    <location>
        <position position="145"/>
    </location>
</feature>
<feature type="modified residue" description="Phosphothreonine" evidence="1">
    <location>
        <position position="151"/>
    </location>
</feature>
<feature type="modified residue" description="Phosphoserine" evidence="3">
    <location>
        <position position="293"/>
    </location>
</feature>
<feature type="modified residue" description="Phosphoserine" evidence="1">
    <location>
        <position position="372"/>
    </location>
</feature>
<feature type="modified residue" description="Phosphoserine" evidence="1">
    <location>
        <position position="391"/>
    </location>
</feature>
<feature type="modified residue" description="Phosphoserine" evidence="3">
    <location>
        <position position="556"/>
    </location>
</feature>
<reference key="1">
    <citation type="submission" date="2005-04" db="EMBL/GenBank/DDBJ databases">
        <authorList>
            <consortium name="NIH - Xenopus Gene Collection (XGC) project"/>
        </authorList>
    </citation>
    <scope>NUCLEOTIDE SEQUENCE [LARGE SCALE MRNA]</scope>
    <source>
        <tissue>Eye</tissue>
    </source>
</reference>
<accession>Q52KS4</accession>
<evidence type="ECO:0000250" key="1"/>
<evidence type="ECO:0000256" key="2">
    <source>
        <dbReference type="SAM" id="MobiDB-lite"/>
    </source>
</evidence>
<evidence type="ECO:0000305" key="3"/>
<sequence>MTATPANSGSNPRKFSEKIALHNQKQAEETRAFDELMSDLTVSRVQFQKLQQLRLAQTRAQYYGGSLPNVNQISSSPNDFQPSFHPMDNIRGMRHHGLVERVSRNRLHSSHHRPVEKHGRQCDSSPYGSVYLSPPPDNNWRRTNSDSALHTSASSSKLQDAFMGGNQAMLRAPKPPQRNPSLQDGEMNNFGEAFSYPTSMTEENMLNVTKPLPKQIWEAQKVQCITSRPRSCEVPGIKVFPSSDSNASLSHYQGSLNTGGSLPDLTNLHFPSPLPTPLDPDDTVYANINAENSSGLPAAMTHLGISNSQGIQNTCSNPSIQATMNNNVNNHTPPGRNNPTLHPSLRLSSLSNPSLPTSALGSSPRRRHTPVSPLTLTPGSESNRSISNQFSPTSPMDMLPNSQGVSMDRCPLSLPPLEPPPPYPLYTDQPQPQLHHTQQQMHESPESQNFQPPSPVPCPPLDLNLANSSLSGFFGDSFFDQQQPTKQGKYLWQQQEQYDMFGSPSSSLPNTNAFFDPNMNLQYSQASLMGLGGSHGSLQDSFHLRPNYLYSNYGGSVPNIILTDDSSNSLSKDISNAVAGVSELGFDADNTFQFDDELKLGPLSLDGLSMLSDPDMVLPDPSIEDSFRSDKL</sequence>
<organism>
    <name type="scientific">Xenopus laevis</name>
    <name type="common">African clawed frog</name>
    <dbReference type="NCBI Taxonomy" id="8355"/>
    <lineage>
        <taxon>Eukaryota</taxon>
        <taxon>Metazoa</taxon>
        <taxon>Chordata</taxon>
        <taxon>Craniata</taxon>
        <taxon>Vertebrata</taxon>
        <taxon>Euteleostomi</taxon>
        <taxon>Amphibia</taxon>
        <taxon>Batrachia</taxon>
        <taxon>Anura</taxon>
        <taxon>Pipoidea</taxon>
        <taxon>Pipidae</taxon>
        <taxon>Xenopodinae</taxon>
        <taxon>Xenopus</taxon>
        <taxon>Xenopus</taxon>
    </lineage>
</organism>
<protein>
    <recommendedName>
        <fullName>CREB-regulated transcription coactivator 3</fullName>
    </recommendedName>
    <alternativeName>
        <fullName>Transducer of regulated cAMP response element-binding protein 3</fullName>
        <shortName>TORC-3</shortName>
        <shortName>Transducer of CREB protein 3</shortName>
    </alternativeName>
</protein>
<keyword id="KW-0010">Activator</keyword>
<keyword id="KW-0963">Cytoplasm</keyword>
<keyword id="KW-0539">Nucleus</keyword>
<keyword id="KW-0597">Phosphoprotein</keyword>
<keyword id="KW-1185">Reference proteome</keyword>
<keyword id="KW-0804">Transcription</keyword>
<keyword id="KW-0805">Transcription regulation</keyword>